<organism>
    <name type="scientific">Pseudomonas aeruginosa (strain ATCC 15692 / DSM 22644 / CIP 104116 / JCM 14847 / LMG 12228 / 1C / PRS 101 / PAO1)</name>
    <dbReference type="NCBI Taxonomy" id="208964"/>
    <lineage>
        <taxon>Bacteria</taxon>
        <taxon>Pseudomonadati</taxon>
        <taxon>Pseudomonadota</taxon>
        <taxon>Gammaproteobacteria</taxon>
        <taxon>Pseudomonadales</taxon>
        <taxon>Pseudomonadaceae</taxon>
        <taxon>Pseudomonas</taxon>
    </lineage>
</organism>
<name>NDK_PSEAE</name>
<proteinExistence type="evidence at protein level"/>
<feature type="chain" id="PRO_0000137024" description="Nucleoside diphosphate kinase">
    <location>
        <begin position="1"/>
        <end position="143"/>
    </location>
</feature>
<feature type="active site" description="Pros-phosphohistidine intermediate" evidence="1">
    <location>
        <position position="117"/>
    </location>
</feature>
<feature type="binding site" evidence="1">
    <location>
        <position position="11"/>
    </location>
    <ligand>
        <name>ATP</name>
        <dbReference type="ChEBI" id="CHEBI:30616"/>
    </ligand>
</feature>
<feature type="binding site" evidence="1">
    <location>
        <position position="59"/>
    </location>
    <ligand>
        <name>ATP</name>
        <dbReference type="ChEBI" id="CHEBI:30616"/>
    </ligand>
</feature>
<feature type="binding site" evidence="1">
    <location>
        <position position="87"/>
    </location>
    <ligand>
        <name>ATP</name>
        <dbReference type="ChEBI" id="CHEBI:30616"/>
    </ligand>
</feature>
<feature type="binding site" evidence="1">
    <location>
        <position position="93"/>
    </location>
    <ligand>
        <name>ATP</name>
        <dbReference type="ChEBI" id="CHEBI:30616"/>
    </ligand>
</feature>
<feature type="binding site" evidence="1">
    <location>
        <position position="104"/>
    </location>
    <ligand>
        <name>ATP</name>
        <dbReference type="ChEBI" id="CHEBI:30616"/>
    </ligand>
</feature>
<feature type="binding site" evidence="1">
    <location>
        <position position="114"/>
    </location>
    <ligand>
        <name>ATP</name>
        <dbReference type="ChEBI" id="CHEBI:30616"/>
    </ligand>
</feature>
<feature type="mutagenesis site" description="Lack of autophosphorylation and of kinase activity. Cleaved to 12-kDa form, but cannot form a complex with pyruvate kinase. Strong decrease in alginate production.">
    <original>A</original>
    <variation>P</variation>
    <location>
        <position position="14"/>
    </location>
</feature>
<feature type="mutagenesis site" description="Lack of autophosphorylation and of kinase activity. Cleaved to 12-kDa form, but cannot form a complex with pyruvate kinase. Strong decrease in alginate production.">
    <original>G</original>
    <variation>V</variation>
    <location>
        <position position="21"/>
    </location>
</feature>
<feature type="mutagenesis site" description="Decrease in autophosphorylation. Strong decrease in alginate production.">
    <original>S</original>
    <variation>A</variation>
    <location>
        <position position="43"/>
    </location>
</feature>
<feature type="mutagenesis site" description="No change in autophosphorylation. Strong decrease in alginate production.">
    <original>E</original>
    <variation>D</variation>
    <location>
        <position position="56"/>
    </location>
</feature>
<feature type="mutagenesis site" description="Decrease in autophosphorylation. Strong decrease in alginate production.">
    <original>S</original>
    <variation>C</variation>
    <location>
        <position position="69"/>
    </location>
</feature>
<feature type="mutagenesis site" description="Decrease in autophosphorylation. Strong decrease in alginate production.">
    <original>E</original>
    <variation>K</variation>
    <location>
        <position position="80"/>
    </location>
</feature>
<feature type="mutagenesis site" description="Decrease in autophosphorylation. Strong decrease in alginate production.">
    <original>G</original>
    <variation>V</variation>
    <location>
        <position position="91"/>
    </location>
</feature>
<feature type="mutagenesis site" description="Lack of autophosphorylation and of kinase activity. Strong decrease in alginate production.">
    <original>H</original>
    <variation>Q</variation>
    <location>
        <position position="117"/>
    </location>
</feature>
<feature type="mutagenesis site" description="No change in autophosphorylation. Does not affect alginate production.">
    <original>S</original>
    <variation>A</variation>
    <location>
        <position position="119"/>
    </location>
</feature>
<feature type="mutagenesis site" description="No change in autophosphorylation. Does not affect alginate production.">
    <original>S</original>
    <variation>A</variation>
    <location>
        <position position="121"/>
    </location>
</feature>
<feature type="mutagenesis site" description="Lack of autophosphorylation and of kinase activity. Strong decrease in alginate production.">
    <original>A</original>
    <variation>R</variation>
    <location>
        <position position="125"/>
    </location>
</feature>
<feature type="sequence conflict" description="In Ref. 1; AAC44154." evidence="5" ref="1">
    <original>E</original>
    <variation>A</variation>
    <location>
        <position position="56"/>
    </location>
</feature>
<feature type="sequence conflict" description="In Ref. 1; AAC44154." evidence="5" ref="1">
    <original>A</original>
    <variation>V</variation>
    <location>
        <position position="130"/>
    </location>
</feature>
<feature type="sequence conflict" description="In Ref. 1; AAC44154." evidence="5" ref="1">
    <original>A</original>
    <variation>D</variation>
    <location>
        <position position="135"/>
    </location>
</feature>
<dbReference type="EC" id="2.7.4.6" evidence="1 2 3"/>
<dbReference type="EMBL" id="U41267">
    <property type="protein sequence ID" value="AAC44154.1"/>
    <property type="molecule type" value="Genomic_DNA"/>
</dbReference>
<dbReference type="EMBL" id="AE004091">
    <property type="protein sequence ID" value="AAG07194.1"/>
    <property type="molecule type" value="Genomic_DNA"/>
</dbReference>
<dbReference type="PIR" id="B83172">
    <property type="entry name" value="B83172"/>
</dbReference>
<dbReference type="PIR" id="S77589">
    <property type="entry name" value="S77589"/>
</dbReference>
<dbReference type="RefSeq" id="NP_252496.1">
    <property type="nucleotide sequence ID" value="NC_002516.2"/>
</dbReference>
<dbReference type="RefSeq" id="WP_003092811.1">
    <property type="nucleotide sequence ID" value="NZ_QZGE01000001.1"/>
</dbReference>
<dbReference type="SMR" id="Q59636"/>
<dbReference type="FunCoup" id="Q59636">
    <property type="interactions" value="699"/>
</dbReference>
<dbReference type="STRING" id="208964.PA3807"/>
<dbReference type="PaxDb" id="208964-PA3807"/>
<dbReference type="GeneID" id="77219697"/>
<dbReference type="GeneID" id="879892"/>
<dbReference type="KEGG" id="pae:PA3807"/>
<dbReference type="PATRIC" id="fig|208964.12.peg.3986"/>
<dbReference type="PseudoCAP" id="PA3807"/>
<dbReference type="HOGENOM" id="CLU_060216_8_1_6"/>
<dbReference type="InParanoid" id="Q59636"/>
<dbReference type="OrthoDB" id="9801161at2"/>
<dbReference type="PhylomeDB" id="Q59636"/>
<dbReference type="BioCyc" id="PAER208964:G1FZ6-3878-MONOMER"/>
<dbReference type="BRENDA" id="2.7.4.6">
    <property type="organism ID" value="5087"/>
</dbReference>
<dbReference type="PHI-base" id="PHI:6438"/>
<dbReference type="Proteomes" id="UP000002438">
    <property type="component" value="Chromosome"/>
</dbReference>
<dbReference type="GO" id="GO:0005737">
    <property type="term" value="C:cytoplasm"/>
    <property type="evidence" value="ECO:0007669"/>
    <property type="project" value="UniProtKB-SubCell"/>
</dbReference>
<dbReference type="GO" id="GO:0005524">
    <property type="term" value="F:ATP binding"/>
    <property type="evidence" value="ECO:0007669"/>
    <property type="project" value="UniProtKB-UniRule"/>
</dbReference>
<dbReference type="GO" id="GO:0046872">
    <property type="term" value="F:metal ion binding"/>
    <property type="evidence" value="ECO:0007669"/>
    <property type="project" value="UniProtKB-KW"/>
</dbReference>
<dbReference type="GO" id="GO:0004550">
    <property type="term" value="F:nucleoside diphosphate kinase activity"/>
    <property type="evidence" value="ECO:0000314"/>
    <property type="project" value="PseudoCAP"/>
</dbReference>
<dbReference type="GO" id="GO:0042121">
    <property type="term" value="P:alginic acid biosynthetic process"/>
    <property type="evidence" value="ECO:0000314"/>
    <property type="project" value="PseudoCAP"/>
</dbReference>
<dbReference type="GO" id="GO:0006241">
    <property type="term" value="P:CTP biosynthetic process"/>
    <property type="evidence" value="ECO:0007669"/>
    <property type="project" value="UniProtKB-UniRule"/>
</dbReference>
<dbReference type="GO" id="GO:0006183">
    <property type="term" value="P:GTP biosynthetic process"/>
    <property type="evidence" value="ECO:0007669"/>
    <property type="project" value="UniProtKB-UniRule"/>
</dbReference>
<dbReference type="GO" id="GO:0006163">
    <property type="term" value="P:purine nucleotide metabolic process"/>
    <property type="evidence" value="ECO:0000314"/>
    <property type="project" value="PseudoCAP"/>
</dbReference>
<dbReference type="GO" id="GO:0006220">
    <property type="term" value="P:pyrimidine nucleotide metabolic process"/>
    <property type="evidence" value="ECO:0000314"/>
    <property type="project" value="PseudoCAP"/>
</dbReference>
<dbReference type="GO" id="GO:0006228">
    <property type="term" value="P:UTP biosynthetic process"/>
    <property type="evidence" value="ECO:0007669"/>
    <property type="project" value="UniProtKB-UniRule"/>
</dbReference>
<dbReference type="CDD" id="cd04413">
    <property type="entry name" value="NDPk_I"/>
    <property type="match status" value="1"/>
</dbReference>
<dbReference type="FunFam" id="3.30.70.141:FF:000001">
    <property type="entry name" value="Nucleoside diphosphate kinase"/>
    <property type="match status" value="1"/>
</dbReference>
<dbReference type="Gene3D" id="3.30.70.141">
    <property type="entry name" value="Nucleoside diphosphate kinase-like domain"/>
    <property type="match status" value="1"/>
</dbReference>
<dbReference type="HAMAP" id="MF_00451">
    <property type="entry name" value="NDP_kinase"/>
    <property type="match status" value="1"/>
</dbReference>
<dbReference type="InterPro" id="IPR034907">
    <property type="entry name" value="NDK-like_dom"/>
</dbReference>
<dbReference type="InterPro" id="IPR036850">
    <property type="entry name" value="NDK-like_dom_sf"/>
</dbReference>
<dbReference type="InterPro" id="IPR001564">
    <property type="entry name" value="Nucleoside_diP_kinase"/>
</dbReference>
<dbReference type="InterPro" id="IPR023005">
    <property type="entry name" value="Nucleoside_diP_kinase_AS"/>
</dbReference>
<dbReference type="NCBIfam" id="NF001908">
    <property type="entry name" value="PRK00668.1"/>
    <property type="match status" value="1"/>
</dbReference>
<dbReference type="PANTHER" id="PTHR46161">
    <property type="entry name" value="NUCLEOSIDE DIPHOSPHATE KINASE"/>
    <property type="match status" value="1"/>
</dbReference>
<dbReference type="PANTHER" id="PTHR46161:SF3">
    <property type="entry name" value="NUCLEOSIDE DIPHOSPHATE KINASE DDB_G0292928-RELATED"/>
    <property type="match status" value="1"/>
</dbReference>
<dbReference type="Pfam" id="PF00334">
    <property type="entry name" value="NDK"/>
    <property type="match status" value="1"/>
</dbReference>
<dbReference type="PRINTS" id="PR01243">
    <property type="entry name" value="NUCDPKINASE"/>
</dbReference>
<dbReference type="SMART" id="SM00562">
    <property type="entry name" value="NDK"/>
    <property type="match status" value="1"/>
</dbReference>
<dbReference type="SUPFAM" id="SSF54919">
    <property type="entry name" value="Nucleoside diphosphate kinase, NDK"/>
    <property type="match status" value="1"/>
</dbReference>
<dbReference type="PROSITE" id="PS00469">
    <property type="entry name" value="NDPK"/>
    <property type="match status" value="1"/>
</dbReference>
<dbReference type="PROSITE" id="PS51374">
    <property type="entry name" value="NDPK_LIKE"/>
    <property type="match status" value="1"/>
</dbReference>
<comment type="function">
    <text evidence="2 3">Major role in the synthesis of nucleoside triphosphates other than ATP. The ATP gamma phosphate is transferred to the NDP beta phosphate via a ping-pong mechanism, using a phosphorylated active-site intermediate. The 12-kDa membrane-associated form synthesizes GTP in preference to other nucleoside triphosphates. Important for alginate synthesis.</text>
</comment>
<comment type="catalytic activity">
    <reaction evidence="1 2 3">
        <text>a 2'-deoxyribonucleoside 5'-diphosphate + ATP = a 2'-deoxyribonucleoside 5'-triphosphate + ADP</text>
        <dbReference type="Rhea" id="RHEA:44640"/>
        <dbReference type="ChEBI" id="CHEBI:30616"/>
        <dbReference type="ChEBI" id="CHEBI:61560"/>
        <dbReference type="ChEBI" id="CHEBI:73316"/>
        <dbReference type="ChEBI" id="CHEBI:456216"/>
        <dbReference type="EC" id="2.7.4.6"/>
    </reaction>
</comment>
<comment type="catalytic activity">
    <reaction evidence="1 2 3">
        <text>a ribonucleoside 5'-diphosphate + ATP = a ribonucleoside 5'-triphosphate + ADP</text>
        <dbReference type="Rhea" id="RHEA:18113"/>
        <dbReference type="ChEBI" id="CHEBI:30616"/>
        <dbReference type="ChEBI" id="CHEBI:57930"/>
        <dbReference type="ChEBI" id="CHEBI:61557"/>
        <dbReference type="ChEBI" id="CHEBI:456216"/>
        <dbReference type="EC" id="2.7.4.6"/>
    </reaction>
</comment>
<comment type="cofactor">
    <cofactor evidence="1">
        <name>Mg(2+)</name>
        <dbReference type="ChEBI" id="CHEBI:18420"/>
    </cofactor>
</comment>
<comment type="subunit">
    <text evidence="1 3">Homotetramer (By similarity). The 12-kDa form interacts with pyruvate kinase (PubMed:8955392).</text>
</comment>
<comment type="subcellular location">
    <subcellularLocation>
        <location evidence="1 2">Cytoplasm</location>
    </subcellularLocation>
    <text evidence="2">Ndk is predominantly cytoplasmic. The 12-kDa form is predominantly membrane-associated.</text>
</comment>
<comment type="developmental stage">
    <text evidence="2">The level of the 12-kDa form increases toward the late stationary phase of growth.</text>
</comment>
<comment type="PTM">
    <text evidence="2">An intracellular protease cleaves Ndk to a truncated 12-kDa form that undergoes autophosphorylation almost as efficiency as Ndk does.</text>
</comment>
<comment type="similarity">
    <text evidence="1 5">Belongs to the NDK family.</text>
</comment>
<keyword id="KW-0067">ATP-binding</keyword>
<keyword id="KW-0963">Cytoplasm</keyword>
<keyword id="KW-0418">Kinase</keyword>
<keyword id="KW-0460">Magnesium</keyword>
<keyword id="KW-0479">Metal-binding</keyword>
<keyword id="KW-0546">Nucleotide metabolism</keyword>
<keyword id="KW-0547">Nucleotide-binding</keyword>
<keyword id="KW-0597">Phosphoprotein</keyword>
<keyword id="KW-1185">Reference proteome</keyword>
<keyword id="KW-0808">Transferase</keyword>
<reference key="1">
    <citation type="journal article" date="1996" name="Mol. Microbiol.">
        <title>Nucleoside diphosphate kinase from Pseudomonas aeruginosa: characterization of the gene and its role in cellular growth and exopolysaccharide alginate synthesis.</title>
        <authorList>
            <person name="Sundin G.W."/>
            <person name="Shankar S."/>
            <person name="Chugani S.A."/>
            <person name="Chopade B."/>
            <person name="Kavanaugh-Black A."/>
            <person name="Chakrabarty A.M."/>
        </authorList>
    </citation>
    <scope>NUCLEOTIDE SEQUENCE [GENOMIC DNA]</scope>
    <source>
        <strain>8822</strain>
    </source>
</reference>
<reference key="2">
    <citation type="journal article" date="2000" name="Nature">
        <title>Complete genome sequence of Pseudomonas aeruginosa PAO1, an opportunistic pathogen.</title>
        <authorList>
            <person name="Stover C.K."/>
            <person name="Pham X.-Q.T."/>
            <person name="Erwin A.L."/>
            <person name="Mizoguchi S.D."/>
            <person name="Warrener P."/>
            <person name="Hickey M.J."/>
            <person name="Brinkman F.S.L."/>
            <person name="Hufnagle W.O."/>
            <person name="Kowalik D.J."/>
            <person name="Lagrou M."/>
            <person name="Garber R.L."/>
            <person name="Goltry L."/>
            <person name="Tolentino E."/>
            <person name="Westbrock-Wadman S."/>
            <person name="Yuan Y."/>
            <person name="Brody L.L."/>
            <person name="Coulter S.N."/>
            <person name="Folger K.R."/>
            <person name="Kas A."/>
            <person name="Larbig K."/>
            <person name="Lim R.M."/>
            <person name="Smith K.A."/>
            <person name="Spencer D.H."/>
            <person name="Wong G.K.-S."/>
            <person name="Wu Z."/>
            <person name="Paulsen I.T."/>
            <person name="Reizer J."/>
            <person name="Saier M.H. Jr."/>
            <person name="Hancock R.E.W."/>
            <person name="Lory S."/>
            <person name="Olson M.V."/>
        </authorList>
    </citation>
    <scope>NUCLEOTIDE SEQUENCE [LARGE SCALE GENOMIC DNA]</scope>
    <source>
        <strain>ATCC 15692 / DSM 22644 / CIP 104116 / JCM 14847 / LMG 12228 / 1C / PRS 101 / PAO1</strain>
    </source>
</reference>
<reference key="3">
    <citation type="journal article" date="1996" name="J. Bacteriol.">
        <title>Two forms of the nucleoside diphosphate kinase of Pseudomonas aeruginosa 8830: altered specificity of nucleoside triphosphate synthesis by the cell membrane-associated form of the truncated enzyme.</title>
        <authorList>
            <person name="Shankar S."/>
            <person name="Kamath S."/>
            <person name="Chakrabarty A.M."/>
        </authorList>
    </citation>
    <scope>FUNCTION</scope>
    <scope>CATALYTIC ACTIVITY</scope>
    <scope>SUBCELLULAR LOCATION</scope>
    <scope>DEVELOPMENTAL STAGE</scope>
    <scope>PROTEOLYTIC CLEAVAGE</scope>
    <source>
        <strain>8830</strain>
    </source>
</reference>
<reference key="4">
    <citation type="journal article" date="1996" name="J. Bacteriol.">
        <title>Mutational analysis of nucleoside diphosphate kinase from Pseudomonas aeruginosa: characterization of critical amino acid residues involved in exopolysaccharide alginate synthesis.</title>
        <authorList>
            <person name="Sundin G.W."/>
            <person name="Shankar S."/>
            <person name="Chakrabarty A.M."/>
        </authorList>
    </citation>
    <scope>FUNCTION</scope>
    <scope>CATALYTIC ACTIVITY</scope>
    <scope>INTERACTION WITH PYRUVATE KINASE</scope>
    <scope>MUTAGENESIS OF ALA-14; GLY-21; SER-43; GLU-56; SER-69; GLU-80; GLY-91; HIS-117; SER-119; SER-121 AND ALA-125</scope>
    <source>
        <strain>8830</strain>
    </source>
</reference>
<evidence type="ECO:0000255" key="1">
    <source>
        <dbReference type="HAMAP-Rule" id="MF_00451"/>
    </source>
</evidence>
<evidence type="ECO:0000269" key="2">
    <source>
    </source>
</evidence>
<evidence type="ECO:0000269" key="3">
    <source>
    </source>
</evidence>
<evidence type="ECO:0000303" key="4">
    <source>
    </source>
</evidence>
<evidence type="ECO:0000305" key="5"/>
<protein>
    <recommendedName>
        <fullName evidence="1 4">Nucleoside diphosphate kinase</fullName>
        <shortName evidence="1">NDK</shortName>
        <shortName evidence="1">NDP kinase</shortName>
        <ecNumber evidence="1 2 3">2.7.4.6</ecNumber>
    </recommendedName>
    <alternativeName>
        <fullName evidence="1">Nucleoside-2-P kinase</fullName>
    </alternativeName>
</protein>
<gene>
    <name evidence="1 4" type="primary">ndk</name>
    <name type="ordered locus">PA3807</name>
</gene>
<sequence length="143" mass="15592">MALQRTLSIIKPDAVSKNVIGEILTRFEKAGLRVVAAKMVQLSEREAGGFYAEHKERPFFKDLVSFMTSGPVVVQVLEGEDAIAKNRELMGATDPKKADAGTIRADFAVSIDENAVHGSDSEASAAREIAYFFAATEVCERIR</sequence>
<accession>Q59636</accession>